<organism>
    <name type="scientific">Acaryochloris marina (strain MBIC 11017)</name>
    <dbReference type="NCBI Taxonomy" id="329726"/>
    <lineage>
        <taxon>Bacteria</taxon>
        <taxon>Bacillati</taxon>
        <taxon>Cyanobacteriota</taxon>
        <taxon>Cyanophyceae</taxon>
        <taxon>Acaryochloridales</taxon>
        <taxon>Acaryochloridaceae</taxon>
        <taxon>Acaryochloris</taxon>
    </lineage>
</organism>
<comment type="function">
    <text evidence="1">NDH-1 shuttles electrons from an unknown electron donor, via FMN and iron-sulfur (Fe-S) centers, to quinones in the respiratory and/or the photosynthetic chain. The immediate electron acceptor for the enzyme in this species is believed to be plastoquinone. Couples the redox reaction to proton translocation, and thus conserves the redox energy in a proton gradient. Cyanobacterial NDH-1 also plays a role in inorganic carbon-concentration.</text>
</comment>
<comment type="catalytic activity">
    <reaction evidence="1">
        <text>a plastoquinone + NADH + (n+1) H(+)(in) = a plastoquinol + NAD(+) + n H(+)(out)</text>
        <dbReference type="Rhea" id="RHEA:42608"/>
        <dbReference type="Rhea" id="RHEA-COMP:9561"/>
        <dbReference type="Rhea" id="RHEA-COMP:9562"/>
        <dbReference type="ChEBI" id="CHEBI:15378"/>
        <dbReference type="ChEBI" id="CHEBI:17757"/>
        <dbReference type="ChEBI" id="CHEBI:57540"/>
        <dbReference type="ChEBI" id="CHEBI:57945"/>
        <dbReference type="ChEBI" id="CHEBI:62192"/>
    </reaction>
</comment>
<comment type="catalytic activity">
    <reaction evidence="1">
        <text>a plastoquinone + NADPH + (n+1) H(+)(in) = a plastoquinol + NADP(+) + n H(+)(out)</text>
        <dbReference type="Rhea" id="RHEA:42612"/>
        <dbReference type="Rhea" id="RHEA-COMP:9561"/>
        <dbReference type="Rhea" id="RHEA-COMP:9562"/>
        <dbReference type="ChEBI" id="CHEBI:15378"/>
        <dbReference type="ChEBI" id="CHEBI:17757"/>
        <dbReference type="ChEBI" id="CHEBI:57783"/>
        <dbReference type="ChEBI" id="CHEBI:58349"/>
        <dbReference type="ChEBI" id="CHEBI:62192"/>
    </reaction>
</comment>
<comment type="cofactor">
    <cofactor evidence="1">
        <name>[4Fe-4S] cluster</name>
        <dbReference type="ChEBI" id="CHEBI:49883"/>
    </cofactor>
    <text evidence="1">Binds 1 [4Fe-4S] cluster.</text>
</comment>
<comment type="subunit">
    <text evidence="1">NDH-1 can be composed of about 15 different subunits; different subcomplexes with different compositions have been identified which probably have different functions.</text>
</comment>
<comment type="subcellular location">
    <subcellularLocation>
        <location evidence="1">Cellular thylakoid membrane</location>
        <topology evidence="1">Peripheral membrane protein</topology>
        <orientation evidence="1">Cytoplasmic side</orientation>
    </subcellularLocation>
</comment>
<comment type="similarity">
    <text evidence="1">Belongs to the complex I 20 kDa subunit family.</text>
</comment>
<feature type="chain" id="PRO_0000358335" description="NAD(P)H-quinone oxidoreductase subunit K 2">
    <location>
        <begin position="1"/>
        <end position="209"/>
    </location>
</feature>
<feature type="binding site" evidence="1">
    <location>
        <position position="53"/>
    </location>
    <ligand>
        <name>[4Fe-4S] cluster</name>
        <dbReference type="ChEBI" id="CHEBI:49883"/>
    </ligand>
</feature>
<feature type="binding site" evidence="1">
    <location>
        <position position="54"/>
    </location>
    <ligand>
        <name>[4Fe-4S] cluster</name>
        <dbReference type="ChEBI" id="CHEBI:49883"/>
    </ligand>
</feature>
<feature type="binding site" evidence="1">
    <location>
        <position position="118"/>
    </location>
    <ligand>
        <name>[4Fe-4S] cluster</name>
        <dbReference type="ChEBI" id="CHEBI:49883"/>
    </ligand>
</feature>
<feature type="binding site" evidence="1">
    <location>
        <position position="149"/>
    </location>
    <ligand>
        <name>[4Fe-4S] cluster</name>
        <dbReference type="ChEBI" id="CHEBI:49883"/>
    </ligand>
</feature>
<sequence>MKPQSLEANIINPITPLEVTQELSDNVILTALDDLYDWVKMSSLYPFMFGTACCFMEFMGAYASRFDMERFGMIPRATPRQADLLITAGTITMKYAPALVRLYEQMPEPKYVMAMGACTITGGMFSADSPSAVRGVDKLIPVDVYIPGCPPRAEAVLDAITKLRKKIANESLQERDTTQQTHRYYSIPHKMKVVPPAVTGQYLQSHEVA</sequence>
<name>NDHK2_ACAM1</name>
<protein>
    <recommendedName>
        <fullName evidence="1">NAD(P)H-quinone oxidoreductase subunit K 2</fullName>
        <ecNumber evidence="1">7.1.1.-</ecNumber>
    </recommendedName>
    <alternativeName>
        <fullName evidence="1">NAD(P)H dehydrogenase I subunit K 2</fullName>
    </alternativeName>
    <alternativeName>
        <fullName evidence="1">NDH-1 subunit K 2</fullName>
        <shortName evidence="1">NDH-K 2</shortName>
    </alternativeName>
</protein>
<gene>
    <name evidence="1" type="primary">ndhK2</name>
    <name type="ordered locus">AM1_A0009</name>
</gene>
<keyword id="KW-0004">4Fe-4S</keyword>
<keyword id="KW-0408">Iron</keyword>
<keyword id="KW-0411">Iron-sulfur</keyword>
<keyword id="KW-0472">Membrane</keyword>
<keyword id="KW-0479">Metal-binding</keyword>
<keyword id="KW-0520">NAD</keyword>
<keyword id="KW-0521">NADP</keyword>
<keyword id="KW-0614">Plasmid</keyword>
<keyword id="KW-0618">Plastoquinone</keyword>
<keyword id="KW-0874">Quinone</keyword>
<keyword id="KW-1185">Reference proteome</keyword>
<keyword id="KW-0793">Thylakoid</keyword>
<keyword id="KW-1278">Translocase</keyword>
<keyword id="KW-0813">Transport</keyword>
<evidence type="ECO:0000255" key="1">
    <source>
        <dbReference type="HAMAP-Rule" id="MF_01356"/>
    </source>
</evidence>
<accession>A8ZK18</accession>
<geneLocation type="plasmid">
    <name>pREB1</name>
</geneLocation>
<proteinExistence type="inferred from homology"/>
<reference key="1">
    <citation type="journal article" date="2008" name="Proc. Natl. Acad. Sci. U.S.A.">
        <title>Niche adaptation and genome expansion in the chlorophyll d-producing cyanobacterium Acaryochloris marina.</title>
        <authorList>
            <person name="Swingley W.D."/>
            <person name="Chen M."/>
            <person name="Cheung P.C."/>
            <person name="Conrad A.L."/>
            <person name="Dejesa L.C."/>
            <person name="Hao J."/>
            <person name="Honchak B.M."/>
            <person name="Karbach L.E."/>
            <person name="Kurdoglu A."/>
            <person name="Lahiri S."/>
            <person name="Mastrian S.D."/>
            <person name="Miyashita H."/>
            <person name="Page L."/>
            <person name="Ramakrishna P."/>
            <person name="Satoh S."/>
            <person name="Sattley W.M."/>
            <person name="Shimada Y."/>
            <person name="Taylor H.L."/>
            <person name="Tomo T."/>
            <person name="Tsuchiya T."/>
            <person name="Wang Z.T."/>
            <person name="Raymond J."/>
            <person name="Mimuro M."/>
            <person name="Blankenship R.E."/>
            <person name="Touchman J.W."/>
        </authorList>
    </citation>
    <scope>NUCLEOTIDE SEQUENCE [LARGE SCALE GENOMIC DNA]</scope>
    <source>
        <strain>MBIC 11017</strain>
    </source>
</reference>
<dbReference type="EC" id="7.1.1.-" evidence="1"/>
<dbReference type="EMBL" id="CP000838">
    <property type="protein sequence ID" value="ABW31518.1"/>
    <property type="molecule type" value="Genomic_DNA"/>
</dbReference>
<dbReference type="SMR" id="A8ZK18"/>
<dbReference type="KEGG" id="amr:AM1_A0009"/>
<dbReference type="HOGENOM" id="CLU_055737_2_1_3"/>
<dbReference type="OrthoDB" id="9786737at2"/>
<dbReference type="Proteomes" id="UP000000268">
    <property type="component" value="Plasmid pREB1"/>
</dbReference>
<dbReference type="GO" id="GO:0031676">
    <property type="term" value="C:plasma membrane-derived thylakoid membrane"/>
    <property type="evidence" value="ECO:0007669"/>
    <property type="project" value="UniProtKB-SubCell"/>
</dbReference>
<dbReference type="GO" id="GO:0045271">
    <property type="term" value="C:respiratory chain complex I"/>
    <property type="evidence" value="ECO:0007669"/>
    <property type="project" value="TreeGrafter"/>
</dbReference>
<dbReference type="GO" id="GO:0051539">
    <property type="term" value="F:4 iron, 4 sulfur cluster binding"/>
    <property type="evidence" value="ECO:0007669"/>
    <property type="project" value="UniProtKB-KW"/>
</dbReference>
<dbReference type="GO" id="GO:0005506">
    <property type="term" value="F:iron ion binding"/>
    <property type="evidence" value="ECO:0007669"/>
    <property type="project" value="UniProtKB-UniRule"/>
</dbReference>
<dbReference type="GO" id="GO:0008137">
    <property type="term" value="F:NADH dehydrogenase (ubiquinone) activity"/>
    <property type="evidence" value="ECO:0007669"/>
    <property type="project" value="InterPro"/>
</dbReference>
<dbReference type="GO" id="GO:0048038">
    <property type="term" value="F:quinone binding"/>
    <property type="evidence" value="ECO:0007669"/>
    <property type="project" value="UniProtKB-KW"/>
</dbReference>
<dbReference type="GO" id="GO:0009060">
    <property type="term" value="P:aerobic respiration"/>
    <property type="evidence" value="ECO:0007669"/>
    <property type="project" value="TreeGrafter"/>
</dbReference>
<dbReference type="GO" id="GO:0015990">
    <property type="term" value="P:electron transport coupled proton transport"/>
    <property type="evidence" value="ECO:0007669"/>
    <property type="project" value="TreeGrafter"/>
</dbReference>
<dbReference type="GO" id="GO:0019684">
    <property type="term" value="P:photosynthesis, light reaction"/>
    <property type="evidence" value="ECO:0007669"/>
    <property type="project" value="UniProtKB-UniRule"/>
</dbReference>
<dbReference type="FunFam" id="3.40.50.12280:FF:000003">
    <property type="entry name" value="NAD(P)H-quinone oxidoreductase subunit K, chloroplastic"/>
    <property type="match status" value="1"/>
</dbReference>
<dbReference type="Gene3D" id="3.40.50.12280">
    <property type="match status" value="1"/>
</dbReference>
<dbReference type="HAMAP" id="MF_01356">
    <property type="entry name" value="NDH1_NuoB"/>
    <property type="match status" value="1"/>
</dbReference>
<dbReference type="InterPro" id="IPR006137">
    <property type="entry name" value="NADH_UbQ_OxRdtase-like_20kDa"/>
</dbReference>
<dbReference type="InterPro" id="IPR006138">
    <property type="entry name" value="NADH_UQ_OxRdtase_20Kd_su"/>
</dbReference>
<dbReference type="NCBIfam" id="TIGR01957">
    <property type="entry name" value="nuoB_fam"/>
    <property type="match status" value="1"/>
</dbReference>
<dbReference type="NCBIfam" id="NF005012">
    <property type="entry name" value="PRK06411.1"/>
    <property type="match status" value="1"/>
</dbReference>
<dbReference type="PANTHER" id="PTHR11995">
    <property type="entry name" value="NADH DEHYDROGENASE"/>
    <property type="match status" value="1"/>
</dbReference>
<dbReference type="PANTHER" id="PTHR11995:SF14">
    <property type="entry name" value="NADH DEHYDROGENASE [UBIQUINONE] IRON-SULFUR PROTEIN 7, MITOCHONDRIAL"/>
    <property type="match status" value="1"/>
</dbReference>
<dbReference type="Pfam" id="PF01058">
    <property type="entry name" value="Oxidored_q6"/>
    <property type="match status" value="1"/>
</dbReference>
<dbReference type="SUPFAM" id="SSF56770">
    <property type="entry name" value="HydA/Nqo6-like"/>
    <property type="match status" value="1"/>
</dbReference>
<dbReference type="PROSITE" id="PS01150">
    <property type="entry name" value="COMPLEX1_20K"/>
    <property type="match status" value="1"/>
</dbReference>